<reference key="1">
    <citation type="journal article" date="2002" name="Proc. Natl. Acad. Sci. U.S.A.">
        <title>Extensive mosaic structure revealed by the complete genome sequence of uropathogenic Escherichia coli.</title>
        <authorList>
            <person name="Welch R.A."/>
            <person name="Burland V."/>
            <person name="Plunkett G. III"/>
            <person name="Redford P."/>
            <person name="Roesch P."/>
            <person name="Rasko D."/>
            <person name="Buckles E.L."/>
            <person name="Liou S.-R."/>
            <person name="Boutin A."/>
            <person name="Hackett J."/>
            <person name="Stroud D."/>
            <person name="Mayhew G.F."/>
            <person name="Rose D.J."/>
            <person name="Zhou S."/>
            <person name="Schwartz D.C."/>
            <person name="Perna N.T."/>
            <person name="Mobley H.L.T."/>
            <person name="Donnenberg M.S."/>
            <person name="Blattner F.R."/>
        </authorList>
    </citation>
    <scope>NUCLEOTIDE SEQUENCE [LARGE SCALE GENOMIC DNA]</scope>
    <source>
        <strain>CFT073 / ATCC 700928 / UPEC</strain>
    </source>
</reference>
<comment type="function">
    <text evidence="1">Involved in the degradation of chitin. ChbG is essential for growth on the acetylated chitooligosaccharides chitobiose and chitotriose but is dispensable for growth on cellobiose and chitosan dimer, the deacetylated form of chitobiose. Deacetylation of chitobiose-6-P and chitotriose-6-P is necessary for both the activation of the chb promoter by the regulatory protein ChbR and the hydrolysis of phosphorylated beta-glucosides by the phospho-beta-glucosidase ChbF. Catalyzes the removal of only one acetyl group from chitobiose-6-P to yield monoacetylchitobiose-6-P, the inducer of ChbR and the substrate of ChbF.</text>
</comment>
<comment type="catalytic activity">
    <reaction evidence="1">
        <text>N,N'-diacetylchitobiose + H2O = N-acetyl-beta-D-glucosaminyl-(1-&gt;4)-D-glucosamine + acetate</text>
        <dbReference type="Rhea" id="RHEA:27469"/>
        <dbReference type="ChEBI" id="CHEBI:15377"/>
        <dbReference type="ChEBI" id="CHEBI:28681"/>
        <dbReference type="ChEBI" id="CHEBI:30089"/>
        <dbReference type="ChEBI" id="CHEBI:59910"/>
        <dbReference type="EC" id="3.5.1.105"/>
    </reaction>
</comment>
<comment type="catalytic activity">
    <reaction evidence="1">
        <text>diacetylchitobiose-6'-phosphate + H2O = N'-monoacetylchitobiose-6'-phosphate + acetate</text>
        <dbReference type="Rhea" id="RHEA:35083"/>
        <dbReference type="ChEBI" id="CHEBI:15377"/>
        <dbReference type="ChEBI" id="CHEBI:30089"/>
        <dbReference type="ChEBI" id="CHEBI:64883"/>
        <dbReference type="ChEBI" id="CHEBI:71315"/>
    </reaction>
</comment>
<comment type="cofactor">
    <cofactor evidence="1">
        <name>Mg(2+)</name>
        <dbReference type="ChEBI" id="CHEBI:18420"/>
    </cofactor>
</comment>
<comment type="pathway">
    <text evidence="1">Glycan degradation; chitin degradation.</text>
</comment>
<comment type="subunit">
    <text evidence="1">Homodimer.</text>
</comment>
<comment type="subcellular location">
    <subcellularLocation>
        <location evidence="1">Cytoplasm</location>
    </subcellularLocation>
</comment>
<comment type="similarity">
    <text evidence="1">Belongs to the YdjC deacetylase family. ChbG subfamily.</text>
</comment>
<keyword id="KW-0119">Carbohydrate metabolism</keyword>
<keyword id="KW-0146">Chitin degradation</keyword>
<keyword id="KW-0963">Cytoplasm</keyword>
<keyword id="KW-0378">Hydrolase</keyword>
<keyword id="KW-0460">Magnesium</keyword>
<keyword id="KW-0479">Metal-binding</keyword>
<keyword id="KW-0624">Polysaccharide degradation</keyword>
<keyword id="KW-1185">Reference proteome</keyword>
<dbReference type="EC" id="3.5.1.105" evidence="1"/>
<dbReference type="EMBL" id="AE014075">
    <property type="protein sequence ID" value="AAN80591.1"/>
    <property type="molecule type" value="Genomic_DNA"/>
</dbReference>
<dbReference type="RefSeq" id="WP_000440430.1">
    <property type="nucleotide sequence ID" value="NZ_CP051263.1"/>
</dbReference>
<dbReference type="SMR" id="Q8FH10"/>
<dbReference type="STRING" id="199310.c2132"/>
<dbReference type="KEGG" id="ecc:c2132"/>
<dbReference type="eggNOG" id="COG3394">
    <property type="taxonomic scope" value="Bacteria"/>
</dbReference>
<dbReference type="HOGENOM" id="CLU_064244_4_1_6"/>
<dbReference type="BioCyc" id="ECOL199310:C2132-MONOMER"/>
<dbReference type="UniPathway" id="UPA00349"/>
<dbReference type="Proteomes" id="UP000001410">
    <property type="component" value="Chromosome"/>
</dbReference>
<dbReference type="GO" id="GO:0005737">
    <property type="term" value="C:cytoplasm"/>
    <property type="evidence" value="ECO:0007669"/>
    <property type="project" value="UniProtKB-SubCell"/>
</dbReference>
<dbReference type="GO" id="GO:0036311">
    <property type="term" value="F:chitin disaccharide deacetylase activity"/>
    <property type="evidence" value="ECO:0007669"/>
    <property type="project" value="UniProtKB-UniRule"/>
</dbReference>
<dbReference type="GO" id="GO:0019213">
    <property type="term" value="F:deacetylase activity"/>
    <property type="evidence" value="ECO:0007669"/>
    <property type="project" value="TreeGrafter"/>
</dbReference>
<dbReference type="GO" id="GO:0046872">
    <property type="term" value="F:metal ion binding"/>
    <property type="evidence" value="ECO:0007669"/>
    <property type="project" value="UniProtKB-KW"/>
</dbReference>
<dbReference type="GO" id="GO:0006032">
    <property type="term" value="P:chitin catabolic process"/>
    <property type="evidence" value="ECO:0007669"/>
    <property type="project" value="UniProtKB-UniPathway"/>
</dbReference>
<dbReference type="GO" id="GO:0052777">
    <property type="term" value="P:diacetylchitobiose catabolic process"/>
    <property type="evidence" value="ECO:0007669"/>
    <property type="project" value="UniProtKB-UniRule"/>
</dbReference>
<dbReference type="GO" id="GO:0000272">
    <property type="term" value="P:polysaccharide catabolic process"/>
    <property type="evidence" value="ECO:0007669"/>
    <property type="project" value="UniProtKB-UniRule"/>
</dbReference>
<dbReference type="CDD" id="cd10803">
    <property type="entry name" value="YdjC_EF3048_like"/>
    <property type="match status" value="1"/>
</dbReference>
<dbReference type="FunFam" id="3.20.20.370:FF:000001">
    <property type="entry name" value="Chitooligosaccharide deacetylase"/>
    <property type="match status" value="1"/>
</dbReference>
<dbReference type="Gene3D" id="3.20.20.370">
    <property type="entry name" value="Glycoside hydrolase/deacetylase"/>
    <property type="match status" value="1"/>
</dbReference>
<dbReference type="HAMAP" id="MF_01246">
    <property type="entry name" value="COD"/>
    <property type="match status" value="1"/>
</dbReference>
<dbReference type="InterPro" id="IPR022948">
    <property type="entry name" value="COD_ChbG_bac"/>
</dbReference>
<dbReference type="InterPro" id="IPR011330">
    <property type="entry name" value="Glyco_hydro/deAcase_b/a-brl"/>
</dbReference>
<dbReference type="InterPro" id="IPR006879">
    <property type="entry name" value="YdjC-like"/>
</dbReference>
<dbReference type="NCBIfam" id="NF002559">
    <property type="entry name" value="PRK02134.1"/>
    <property type="match status" value="1"/>
</dbReference>
<dbReference type="PANTHER" id="PTHR31609:SF1">
    <property type="entry name" value="CARBOHYDRATE DEACETYLASE"/>
    <property type="match status" value="1"/>
</dbReference>
<dbReference type="PANTHER" id="PTHR31609">
    <property type="entry name" value="YDJC DEACETYLASE FAMILY MEMBER"/>
    <property type="match status" value="1"/>
</dbReference>
<dbReference type="Pfam" id="PF04794">
    <property type="entry name" value="YdjC"/>
    <property type="match status" value="1"/>
</dbReference>
<dbReference type="SUPFAM" id="SSF88713">
    <property type="entry name" value="Glycoside hydrolase/deacetylase"/>
    <property type="match status" value="1"/>
</dbReference>
<protein>
    <recommendedName>
        <fullName evidence="1">Chitooligosaccharide deacetylase</fullName>
        <shortName evidence="1">COD</shortName>
        <ecNumber evidence="1">3.5.1.105</ecNumber>
    </recommendedName>
    <alternativeName>
        <fullName evidence="1">Chitin disaccharide deacetylase</fullName>
    </alternativeName>
    <alternativeName>
        <fullName evidence="1">Chitobiose deacetylase</fullName>
    </alternativeName>
    <alternativeName>
        <fullName evidence="1">Chitobiose-6P deacetylase</fullName>
    </alternativeName>
    <alternativeName>
        <fullName evidence="1">Chitotriose deacetylase</fullName>
    </alternativeName>
    <alternativeName>
        <fullName evidence="1">Chitotriose-6P deacetylase</fullName>
    </alternativeName>
</protein>
<name>CHBG_ECOL6</name>
<organism>
    <name type="scientific">Escherichia coli O6:H1 (strain CFT073 / ATCC 700928 / UPEC)</name>
    <dbReference type="NCBI Taxonomy" id="199310"/>
    <lineage>
        <taxon>Bacteria</taxon>
        <taxon>Pseudomonadati</taxon>
        <taxon>Pseudomonadota</taxon>
        <taxon>Gammaproteobacteria</taxon>
        <taxon>Enterobacterales</taxon>
        <taxon>Enterobacteriaceae</taxon>
        <taxon>Escherichia</taxon>
    </lineage>
</organism>
<feature type="chain" id="PRO_0000051590" description="Chitooligosaccharide deacetylase">
    <location>
        <begin position="1"/>
        <end position="252"/>
    </location>
</feature>
<feature type="binding site" evidence="1">
    <location>
        <position position="61"/>
    </location>
    <ligand>
        <name>Mg(2+)</name>
        <dbReference type="ChEBI" id="CHEBI:18420"/>
    </ligand>
</feature>
<feature type="binding site" evidence="1">
    <location>
        <position position="125"/>
    </location>
    <ligand>
        <name>Mg(2+)</name>
        <dbReference type="ChEBI" id="CHEBI:18420"/>
    </ligand>
</feature>
<gene>
    <name evidence="1" type="primary">chbG</name>
    <name type="ordered locus">c2132</name>
</gene>
<accession>Q8FH10</accession>
<evidence type="ECO:0000255" key="1">
    <source>
        <dbReference type="HAMAP-Rule" id="MF_01246"/>
    </source>
</evidence>
<proteinExistence type="inferred from homology"/>
<sequence length="252" mass="28057">MERLLIVNADDFGLSKGQNYGIIEACRNGIVTSTTALVNGQAIDHAVQLSRDEPSLAIGMHFVLTMGKPLTAMPGLTRDGVLGKWIWQLAEEDALPLEEITQELASQYLRFIELFGRKPTHLDSHHHVHMFPQIFPIVAKFAAEEGIALRIDRQPLSNDGDLPANLRSSQGFSSAFYGEEISEALFLQVLDDSSHRGERSLEVMCHPAFVDNTIRQSAYCFPRLTELDVLTSASLKYAIAERGYRLGSYHDV</sequence>